<feature type="chain" id="PRO_0000160243" description="NADP-dependent malic enzyme">
    <location>
        <begin position="1"/>
        <end position="756"/>
    </location>
</feature>
<feature type="region of interest" description="Malic enzyme">
    <location>
        <begin position="1"/>
        <end position="428"/>
    </location>
</feature>
<feature type="region of interest" description="Phosphate acetyltransferase">
    <location>
        <begin position="429"/>
        <end position="756"/>
    </location>
</feature>
<feature type="active site" description="Proton donor" evidence="2">
    <location>
        <position position="39"/>
    </location>
</feature>
<feature type="active site" description="Proton acceptor" evidence="2">
    <location>
        <position position="94"/>
    </location>
</feature>
<feature type="binding site" evidence="2">
    <location>
        <position position="136"/>
    </location>
    <ligand>
        <name>a divalent metal cation</name>
        <dbReference type="ChEBI" id="CHEBI:60240"/>
    </ligand>
</feature>
<feature type="binding site" evidence="2">
    <location>
        <position position="137"/>
    </location>
    <ligand>
        <name>a divalent metal cation</name>
        <dbReference type="ChEBI" id="CHEBI:60240"/>
    </ligand>
</feature>
<feature type="binding site" evidence="2">
    <location>
        <position position="162"/>
    </location>
    <ligand>
        <name>a divalent metal cation</name>
        <dbReference type="ChEBI" id="CHEBI:60240"/>
    </ligand>
</feature>
<feature type="binding site" evidence="2">
    <location>
        <begin position="195"/>
        <end position="198"/>
    </location>
    <ligand>
        <name>NADP(+)</name>
        <dbReference type="ChEBI" id="CHEBI:58349"/>
    </ligand>
</feature>
<feature type="binding site" evidence="2">
    <location>
        <position position="288"/>
    </location>
    <ligand>
        <name>NADP(+)</name>
        <dbReference type="ChEBI" id="CHEBI:58349"/>
    </ligand>
</feature>
<feature type="binding site" evidence="2">
    <location>
        <position position="320"/>
    </location>
    <ligand>
        <name>NADP(+)</name>
        <dbReference type="ChEBI" id="CHEBI:58349"/>
    </ligand>
</feature>
<sequence>MTEQLRQAALDFHEFPIPGKIEVTPTKSLATQRDLALAYSPGVAEPCLEIEKDPAASYKYTARGNLVAVISNGTAVLGLGNIGALAGKPVMEGKGVLFKKFAGINVFDIEVNEHDPDKLVDIIASLEPTFGGVNLEDIKAPECFYIEQKLRERMNIPVFHDDQHGTAIISAAAIINSLRIVGKKIEDVRLVASGAGAASIACLNLLLSLGMKRENITVCDSKGVVYKGRDDKMDQTKKEYAIEDNGWRKLADAIPNADIFLGCSAAGALTQDMVKSMAAHPIILALANPNPEITPPEAKAVRPDAIVCTGRSDYPNQVNNVLCFPFIFRGALDVGATTINEEMKRAAVYAIADLALEEQNEVVTSAYGGEGATFGADYVIPRPFDPRLIVRIAPAVAKAAMESGVATRPIQNWDAYVEKLTQFVYKTSLFMRPIFSQAKSAKQRIILAEGEENKALHATQEVISMGLANPILIGRRSVIEEKIKKLGLRLTAGVDFEIVDNEDNPRYEECWKHYYELTKRKGITPAIAKRVVRSNTTVLASTLLSLGYADALVCGLFGSYGKHLASIRDIIGLKDGVKTAAALNSLVLPTGNVFLTDTHVNSNPTAEELAEITLMAAEEIHRFGIEPAVALLSHSNFGSSDSLGAPKMREVLQIVKERNPHLMIDGEMRGDLAMNEAHRKELMPDSPLKGSANLLVFPDLSASRISYSLLRGTTTAITVGPILMGMNKSAHILNPGASVRRIINMIAYAAVKAQQE</sequence>
<gene>
    <name type="primary">maeB</name>
    <name type="ordered locus">HI_1245</name>
</gene>
<dbReference type="EC" id="1.1.1.40"/>
<dbReference type="EMBL" id="L42023">
    <property type="protein sequence ID" value="AAC22896.1"/>
    <property type="molecule type" value="Genomic_DNA"/>
</dbReference>
<dbReference type="PIR" id="F64112">
    <property type="entry name" value="F64112"/>
</dbReference>
<dbReference type="RefSeq" id="NP_439401.1">
    <property type="nucleotide sequence ID" value="NC_000907.1"/>
</dbReference>
<dbReference type="SMR" id="P43837"/>
<dbReference type="STRING" id="71421.HI_1245"/>
<dbReference type="EnsemblBacteria" id="AAC22896">
    <property type="protein sequence ID" value="AAC22896"/>
    <property type="gene ID" value="HI_1245"/>
</dbReference>
<dbReference type="KEGG" id="hin:HI_1245"/>
<dbReference type="PATRIC" id="fig|71421.8.peg.1297"/>
<dbReference type="eggNOG" id="COG0280">
    <property type="taxonomic scope" value="Bacteria"/>
</dbReference>
<dbReference type="eggNOG" id="COG0281">
    <property type="taxonomic scope" value="Bacteria"/>
</dbReference>
<dbReference type="HOGENOM" id="CLU_012366_0_0_6"/>
<dbReference type="OrthoDB" id="9805787at2"/>
<dbReference type="PhylomeDB" id="P43837"/>
<dbReference type="BioCyc" id="HINF71421:G1GJ1-1275-MONOMER"/>
<dbReference type="Proteomes" id="UP000000579">
    <property type="component" value="Chromosome"/>
</dbReference>
<dbReference type="GO" id="GO:0016746">
    <property type="term" value="F:acyltransferase activity"/>
    <property type="evidence" value="ECO:0007669"/>
    <property type="project" value="InterPro"/>
</dbReference>
<dbReference type="GO" id="GO:0004473">
    <property type="term" value="F:malate dehydrogenase (decarboxylating) (NADP+) activity"/>
    <property type="evidence" value="ECO:0007669"/>
    <property type="project" value="UniProtKB-EC"/>
</dbReference>
<dbReference type="GO" id="GO:0046872">
    <property type="term" value="F:metal ion binding"/>
    <property type="evidence" value="ECO:0007669"/>
    <property type="project" value="UniProtKB-KW"/>
</dbReference>
<dbReference type="GO" id="GO:0051287">
    <property type="term" value="F:NAD binding"/>
    <property type="evidence" value="ECO:0007669"/>
    <property type="project" value="InterPro"/>
</dbReference>
<dbReference type="GO" id="GO:0008948">
    <property type="term" value="F:oxaloacetate decarboxylase activity"/>
    <property type="evidence" value="ECO:0007669"/>
    <property type="project" value="RHEA"/>
</dbReference>
<dbReference type="GO" id="GO:0006108">
    <property type="term" value="P:malate metabolic process"/>
    <property type="evidence" value="ECO:0007669"/>
    <property type="project" value="InterPro"/>
</dbReference>
<dbReference type="CDD" id="cd05311">
    <property type="entry name" value="NAD_bind_2_malic_enz"/>
    <property type="match status" value="1"/>
</dbReference>
<dbReference type="FunFam" id="3.40.50.10380:FF:000003">
    <property type="entry name" value="NADP-dependent malic enzyme"/>
    <property type="match status" value="1"/>
</dbReference>
<dbReference type="FunFam" id="3.40.50.720:FF:000095">
    <property type="entry name" value="NADP-dependent malic enzyme"/>
    <property type="match status" value="1"/>
</dbReference>
<dbReference type="Gene3D" id="3.40.50.10950">
    <property type="match status" value="1"/>
</dbReference>
<dbReference type="Gene3D" id="3.40.50.10750">
    <property type="entry name" value="Isocitrate/Isopropylmalate dehydrogenase-like"/>
    <property type="match status" value="1"/>
</dbReference>
<dbReference type="Gene3D" id="3.40.50.10380">
    <property type="entry name" value="Malic enzyme, N-terminal domain"/>
    <property type="match status" value="1"/>
</dbReference>
<dbReference type="Gene3D" id="3.40.50.720">
    <property type="entry name" value="NAD(P)-binding Rossmann-like Domain"/>
    <property type="match status" value="1"/>
</dbReference>
<dbReference type="InterPro" id="IPR046346">
    <property type="entry name" value="Aminoacid_DH-like_N_sf"/>
</dbReference>
<dbReference type="InterPro" id="IPR051674">
    <property type="entry name" value="Malate_Decarboxylase"/>
</dbReference>
<dbReference type="InterPro" id="IPR015884">
    <property type="entry name" value="Malic_enzyme_CS"/>
</dbReference>
<dbReference type="InterPro" id="IPR012301">
    <property type="entry name" value="Malic_N_dom"/>
</dbReference>
<dbReference type="InterPro" id="IPR037062">
    <property type="entry name" value="Malic_N_dom_sf"/>
</dbReference>
<dbReference type="InterPro" id="IPR012302">
    <property type="entry name" value="Malic_NAD-bd"/>
</dbReference>
<dbReference type="InterPro" id="IPR045213">
    <property type="entry name" value="Malic_NAD-bd_bact_type"/>
</dbReference>
<dbReference type="InterPro" id="IPR012188">
    <property type="entry name" value="ME_PTA"/>
</dbReference>
<dbReference type="InterPro" id="IPR036291">
    <property type="entry name" value="NAD(P)-bd_dom_sf"/>
</dbReference>
<dbReference type="InterPro" id="IPR042113">
    <property type="entry name" value="P_AcTrfase_dom1"/>
</dbReference>
<dbReference type="InterPro" id="IPR042112">
    <property type="entry name" value="P_AcTrfase_dom2"/>
</dbReference>
<dbReference type="InterPro" id="IPR002505">
    <property type="entry name" value="PTA_PTB"/>
</dbReference>
<dbReference type="PANTHER" id="PTHR43237">
    <property type="entry name" value="NADP-DEPENDENT MALIC ENZYME"/>
    <property type="match status" value="1"/>
</dbReference>
<dbReference type="PANTHER" id="PTHR43237:SF4">
    <property type="entry name" value="NADP-DEPENDENT MALIC ENZYME"/>
    <property type="match status" value="1"/>
</dbReference>
<dbReference type="Pfam" id="PF00390">
    <property type="entry name" value="malic"/>
    <property type="match status" value="1"/>
</dbReference>
<dbReference type="Pfam" id="PF03949">
    <property type="entry name" value="Malic_M"/>
    <property type="match status" value="1"/>
</dbReference>
<dbReference type="Pfam" id="PF01515">
    <property type="entry name" value="PTA_PTB"/>
    <property type="match status" value="1"/>
</dbReference>
<dbReference type="PIRSF" id="PIRSF036684">
    <property type="entry name" value="ME_PTA"/>
    <property type="match status" value="1"/>
</dbReference>
<dbReference type="SMART" id="SM01274">
    <property type="entry name" value="malic"/>
    <property type="match status" value="1"/>
</dbReference>
<dbReference type="SMART" id="SM00919">
    <property type="entry name" value="Malic_M"/>
    <property type="match status" value="1"/>
</dbReference>
<dbReference type="SUPFAM" id="SSF53223">
    <property type="entry name" value="Aminoacid dehydrogenase-like, N-terminal domain"/>
    <property type="match status" value="1"/>
</dbReference>
<dbReference type="SUPFAM" id="SSF53659">
    <property type="entry name" value="Isocitrate/Isopropylmalate dehydrogenase-like"/>
    <property type="match status" value="1"/>
</dbReference>
<dbReference type="SUPFAM" id="SSF51735">
    <property type="entry name" value="NAD(P)-binding Rossmann-fold domains"/>
    <property type="match status" value="1"/>
</dbReference>
<dbReference type="PROSITE" id="PS00331">
    <property type="entry name" value="MALIC_ENZYMES"/>
    <property type="match status" value="1"/>
</dbReference>
<reference key="1">
    <citation type="journal article" date="1995" name="Science">
        <title>Whole-genome random sequencing and assembly of Haemophilus influenzae Rd.</title>
        <authorList>
            <person name="Fleischmann R.D."/>
            <person name="Adams M.D."/>
            <person name="White O."/>
            <person name="Clayton R.A."/>
            <person name="Kirkness E.F."/>
            <person name="Kerlavage A.R."/>
            <person name="Bult C.J."/>
            <person name="Tomb J.-F."/>
            <person name="Dougherty B.A."/>
            <person name="Merrick J.M."/>
            <person name="McKenney K."/>
            <person name="Sutton G.G."/>
            <person name="FitzHugh W."/>
            <person name="Fields C.A."/>
            <person name="Gocayne J.D."/>
            <person name="Scott J.D."/>
            <person name="Shirley R."/>
            <person name="Liu L.-I."/>
            <person name="Glodek A."/>
            <person name="Kelley J.M."/>
            <person name="Weidman J.F."/>
            <person name="Phillips C.A."/>
            <person name="Spriggs T."/>
            <person name="Hedblom E."/>
            <person name="Cotton M.D."/>
            <person name="Utterback T.R."/>
            <person name="Hanna M.C."/>
            <person name="Nguyen D.T."/>
            <person name="Saudek D.M."/>
            <person name="Brandon R.C."/>
            <person name="Fine L.D."/>
            <person name="Fritchman J.L."/>
            <person name="Fuhrmann J.L."/>
            <person name="Geoghagen N.S.M."/>
            <person name="Gnehm C.L."/>
            <person name="McDonald L.A."/>
            <person name="Small K.V."/>
            <person name="Fraser C.M."/>
            <person name="Smith H.O."/>
            <person name="Venter J.C."/>
        </authorList>
    </citation>
    <scope>NUCLEOTIDE SEQUENCE [LARGE SCALE GENOMIC DNA]</scope>
    <source>
        <strain>ATCC 51907 / DSM 11121 / KW20 / Rd</strain>
    </source>
</reference>
<name>MAO2_HAEIN</name>
<protein>
    <recommendedName>
        <fullName>NADP-dependent malic enzyme</fullName>
        <shortName>NADP-ME</shortName>
        <ecNumber>1.1.1.40</ecNumber>
    </recommendedName>
</protein>
<comment type="catalytic activity">
    <reaction>
        <text>(S)-malate + NADP(+) = pyruvate + CO2 + NADPH</text>
        <dbReference type="Rhea" id="RHEA:18253"/>
        <dbReference type="ChEBI" id="CHEBI:15361"/>
        <dbReference type="ChEBI" id="CHEBI:15589"/>
        <dbReference type="ChEBI" id="CHEBI:16526"/>
        <dbReference type="ChEBI" id="CHEBI:57783"/>
        <dbReference type="ChEBI" id="CHEBI:58349"/>
        <dbReference type="EC" id="1.1.1.40"/>
    </reaction>
</comment>
<comment type="catalytic activity">
    <reaction>
        <text>oxaloacetate + H(+) = pyruvate + CO2</text>
        <dbReference type="Rhea" id="RHEA:15641"/>
        <dbReference type="ChEBI" id="CHEBI:15361"/>
        <dbReference type="ChEBI" id="CHEBI:15378"/>
        <dbReference type="ChEBI" id="CHEBI:16452"/>
        <dbReference type="ChEBI" id="CHEBI:16526"/>
        <dbReference type="EC" id="1.1.1.40"/>
    </reaction>
</comment>
<comment type="cofactor">
    <cofactor evidence="1">
        <name>Mg(2+)</name>
        <dbReference type="ChEBI" id="CHEBI:18420"/>
    </cofactor>
    <cofactor evidence="1">
        <name>Mn(2+)</name>
        <dbReference type="ChEBI" id="CHEBI:29035"/>
    </cofactor>
    <text evidence="1">Divalent metal cations. Prefers magnesium or manganese.</text>
</comment>
<comment type="similarity">
    <text evidence="3">In the N-terminal section; belongs to the malic enzymes family.</text>
</comment>
<comment type="similarity">
    <text evidence="3">In the C-terminal section; belongs to the phosphate acetyltransferase and butyryltransferase family.</text>
</comment>
<organism>
    <name type="scientific">Haemophilus influenzae (strain ATCC 51907 / DSM 11121 / KW20 / Rd)</name>
    <dbReference type="NCBI Taxonomy" id="71421"/>
    <lineage>
        <taxon>Bacteria</taxon>
        <taxon>Pseudomonadati</taxon>
        <taxon>Pseudomonadota</taxon>
        <taxon>Gammaproteobacteria</taxon>
        <taxon>Pasteurellales</taxon>
        <taxon>Pasteurellaceae</taxon>
        <taxon>Haemophilus</taxon>
    </lineage>
</organism>
<evidence type="ECO:0000250" key="1"/>
<evidence type="ECO:0000250" key="2">
    <source>
        <dbReference type="UniProtKB" id="P40927"/>
    </source>
</evidence>
<evidence type="ECO:0000305" key="3"/>
<proteinExistence type="inferred from homology"/>
<keyword id="KW-0479">Metal-binding</keyword>
<keyword id="KW-0511">Multifunctional enzyme</keyword>
<keyword id="KW-0521">NADP</keyword>
<keyword id="KW-0560">Oxidoreductase</keyword>
<keyword id="KW-1185">Reference proteome</keyword>
<accession>P43837</accession>